<proteinExistence type="inferred from homology"/>
<accession>Q7WY61</accession>
<sequence>MSSFDKTMKFNFSDDSAETNVNEVLITVYDALQEKGYNPINQIVGYLLSGDPAYIPRHRDARNLIRKLERDELIEELVKSYLEQHKEA</sequence>
<name>YRZL_BACSU</name>
<gene>
    <name type="primary">yrzL</name>
    <name type="ordered locus">BSU27400</name>
</gene>
<protein>
    <recommendedName>
        <fullName>UPF0297 protein YrzL</fullName>
    </recommendedName>
</protein>
<comment type="similarity">
    <text evidence="1">Belongs to the UPF0297 family.</text>
</comment>
<dbReference type="EMBL" id="AL009126">
    <property type="protein sequence ID" value="CAE01464.1"/>
    <property type="molecule type" value="Genomic_DNA"/>
</dbReference>
<dbReference type="RefSeq" id="WP_003225903.1">
    <property type="nucleotide sequence ID" value="NZ_OZ025638.1"/>
</dbReference>
<dbReference type="RefSeq" id="YP_054589.1">
    <property type="nucleotide sequence ID" value="NC_000964.3"/>
</dbReference>
<dbReference type="SMR" id="Q7WY61"/>
<dbReference type="FunCoup" id="Q7WY61">
    <property type="interactions" value="19"/>
</dbReference>
<dbReference type="STRING" id="224308.BSU27400"/>
<dbReference type="jPOST" id="Q7WY61"/>
<dbReference type="PaxDb" id="224308-BSU27400"/>
<dbReference type="EnsemblBacteria" id="CAE01464">
    <property type="protein sequence ID" value="CAE01464"/>
    <property type="gene ID" value="BSU_27400"/>
</dbReference>
<dbReference type="GeneID" id="2914283"/>
<dbReference type="KEGG" id="bsu:BSU27400"/>
<dbReference type="PATRIC" id="fig|224308.179.peg.2976"/>
<dbReference type="eggNOG" id="COG4472">
    <property type="taxonomic scope" value="Bacteria"/>
</dbReference>
<dbReference type="InParanoid" id="Q7WY61"/>
<dbReference type="OrthoDB" id="9796303at2"/>
<dbReference type="PhylomeDB" id="Q7WY61"/>
<dbReference type="BioCyc" id="BSUB:BSU27400-MONOMER"/>
<dbReference type="PRO" id="PR:Q7WY61"/>
<dbReference type="Proteomes" id="UP000001570">
    <property type="component" value="Chromosome"/>
</dbReference>
<dbReference type="HAMAP" id="MF_01507">
    <property type="entry name" value="UPF0297"/>
    <property type="match status" value="1"/>
</dbReference>
<dbReference type="InterPro" id="IPR009309">
    <property type="entry name" value="IreB"/>
</dbReference>
<dbReference type="NCBIfam" id="NF003997">
    <property type="entry name" value="PRK05473.1"/>
    <property type="match status" value="1"/>
</dbReference>
<dbReference type="PANTHER" id="PTHR40067">
    <property type="entry name" value="UPF0297 PROTEIN YRZL"/>
    <property type="match status" value="1"/>
</dbReference>
<dbReference type="PANTHER" id="PTHR40067:SF1">
    <property type="entry name" value="UPF0297 PROTEIN YRZL"/>
    <property type="match status" value="1"/>
</dbReference>
<dbReference type="Pfam" id="PF06135">
    <property type="entry name" value="IreB"/>
    <property type="match status" value="1"/>
</dbReference>
<dbReference type="PIRSF" id="PIRSF037258">
    <property type="entry name" value="DUF965_bac"/>
    <property type="match status" value="1"/>
</dbReference>
<keyword id="KW-1185">Reference proteome</keyword>
<feature type="chain" id="PRO_0000216963" description="UPF0297 protein YrzL">
    <location>
        <begin position="1"/>
        <end position="88"/>
    </location>
</feature>
<reference key="1">
    <citation type="journal article" date="1997" name="Nature">
        <title>The complete genome sequence of the Gram-positive bacterium Bacillus subtilis.</title>
        <authorList>
            <person name="Kunst F."/>
            <person name="Ogasawara N."/>
            <person name="Moszer I."/>
            <person name="Albertini A.M."/>
            <person name="Alloni G."/>
            <person name="Azevedo V."/>
            <person name="Bertero M.G."/>
            <person name="Bessieres P."/>
            <person name="Bolotin A."/>
            <person name="Borchert S."/>
            <person name="Borriss R."/>
            <person name="Boursier L."/>
            <person name="Brans A."/>
            <person name="Braun M."/>
            <person name="Brignell S.C."/>
            <person name="Bron S."/>
            <person name="Brouillet S."/>
            <person name="Bruschi C.V."/>
            <person name="Caldwell B."/>
            <person name="Capuano V."/>
            <person name="Carter N.M."/>
            <person name="Choi S.-K."/>
            <person name="Codani J.-J."/>
            <person name="Connerton I.F."/>
            <person name="Cummings N.J."/>
            <person name="Daniel R.A."/>
            <person name="Denizot F."/>
            <person name="Devine K.M."/>
            <person name="Duesterhoeft A."/>
            <person name="Ehrlich S.D."/>
            <person name="Emmerson P.T."/>
            <person name="Entian K.-D."/>
            <person name="Errington J."/>
            <person name="Fabret C."/>
            <person name="Ferrari E."/>
            <person name="Foulger D."/>
            <person name="Fritz C."/>
            <person name="Fujita M."/>
            <person name="Fujita Y."/>
            <person name="Fuma S."/>
            <person name="Galizzi A."/>
            <person name="Galleron N."/>
            <person name="Ghim S.-Y."/>
            <person name="Glaser P."/>
            <person name="Goffeau A."/>
            <person name="Golightly E.J."/>
            <person name="Grandi G."/>
            <person name="Guiseppi G."/>
            <person name="Guy B.J."/>
            <person name="Haga K."/>
            <person name="Haiech J."/>
            <person name="Harwood C.R."/>
            <person name="Henaut A."/>
            <person name="Hilbert H."/>
            <person name="Holsappel S."/>
            <person name="Hosono S."/>
            <person name="Hullo M.-F."/>
            <person name="Itaya M."/>
            <person name="Jones L.-M."/>
            <person name="Joris B."/>
            <person name="Karamata D."/>
            <person name="Kasahara Y."/>
            <person name="Klaerr-Blanchard M."/>
            <person name="Klein C."/>
            <person name="Kobayashi Y."/>
            <person name="Koetter P."/>
            <person name="Koningstein G."/>
            <person name="Krogh S."/>
            <person name="Kumano M."/>
            <person name="Kurita K."/>
            <person name="Lapidus A."/>
            <person name="Lardinois S."/>
            <person name="Lauber J."/>
            <person name="Lazarevic V."/>
            <person name="Lee S.-M."/>
            <person name="Levine A."/>
            <person name="Liu H."/>
            <person name="Masuda S."/>
            <person name="Mauel C."/>
            <person name="Medigue C."/>
            <person name="Medina N."/>
            <person name="Mellado R.P."/>
            <person name="Mizuno M."/>
            <person name="Moestl D."/>
            <person name="Nakai S."/>
            <person name="Noback M."/>
            <person name="Noone D."/>
            <person name="O'Reilly M."/>
            <person name="Ogawa K."/>
            <person name="Ogiwara A."/>
            <person name="Oudega B."/>
            <person name="Park S.-H."/>
            <person name="Parro V."/>
            <person name="Pohl T.M."/>
            <person name="Portetelle D."/>
            <person name="Porwollik S."/>
            <person name="Prescott A.M."/>
            <person name="Presecan E."/>
            <person name="Pujic P."/>
            <person name="Purnelle B."/>
            <person name="Rapoport G."/>
            <person name="Rey M."/>
            <person name="Reynolds S."/>
            <person name="Rieger M."/>
            <person name="Rivolta C."/>
            <person name="Rocha E."/>
            <person name="Roche B."/>
            <person name="Rose M."/>
            <person name="Sadaie Y."/>
            <person name="Sato T."/>
            <person name="Scanlan E."/>
            <person name="Schleich S."/>
            <person name="Schroeter R."/>
            <person name="Scoffone F."/>
            <person name="Sekiguchi J."/>
            <person name="Sekowska A."/>
            <person name="Seror S.J."/>
            <person name="Serror P."/>
            <person name="Shin B.-S."/>
            <person name="Soldo B."/>
            <person name="Sorokin A."/>
            <person name="Tacconi E."/>
            <person name="Takagi T."/>
            <person name="Takahashi H."/>
            <person name="Takemaru K."/>
            <person name="Takeuchi M."/>
            <person name="Tamakoshi A."/>
            <person name="Tanaka T."/>
            <person name="Terpstra P."/>
            <person name="Tognoni A."/>
            <person name="Tosato V."/>
            <person name="Uchiyama S."/>
            <person name="Vandenbol M."/>
            <person name="Vannier F."/>
            <person name="Vassarotti A."/>
            <person name="Viari A."/>
            <person name="Wambutt R."/>
            <person name="Wedler E."/>
            <person name="Wedler H."/>
            <person name="Weitzenegger T."/>
            <person name="Winters P."/>
            <person name="Wipat A."/>
            <person name="Yamamoto H."/>
            <person name="Yamane K."/>
            <person name="Yasumoto K."/>
            <person name="Yata K."/>
            <person name="Yoshida K."/>
            <person name="Yoshikawa H.-F."/>
            <person name="Zumstein E."/>
            <person name="Yoshikawa H."/>
            <person name="Danchin A."/>
        </authorList>
    </citation>
    <scope>NUCLEOTIDE SEQUENCE [LARGE SCALE GENOMIC DNA]</scope>
    <source>
        <strain>168</strain>
    </source>
</reference>
<organism>
    <name type="scientific">Bacillus subtilis (strain 168)</name>
    <dbReference type="NCBI Taxonomy" id="224308"/>
    <lineage>
        <taxon>Bacteria</taxon>
        <taxon>Bacillati</taxon>
        <taxon>Bacillota</taxon>
        <taxon>Bacilli</taxon>
        <taxon>Bacillales</taxon>
        <taxon>Bacillaceae</taxon>
        <taxon>Bacillus</taxon>
    </lineage>
</organism>
<evidence type="ECO:0000305" key="1"/>